<organism>
    <name type="scientific">Salinispora arenicola (strain CNS-205)</name>
    <dbReference type="NCBI Taxonomy" id="391037"/>
    <lineage>
        <taxon>Bacteria</taxon>
        <taxon>Bacillati</taxon>
        <taxon>Actinomycetota</taxon>
        <taxon>Actinomycetes</taxon>
        <taxon>Micromonosporales</taxon>
        <taxon>Micromonosporaceae</taxon>
        <taxon>Salinispora</taxon>
    </lineage>
</organism>
<gene>
    <name evidence="1" type="primary">ribH</name>
    <name type="ordered locus">Sare_1871</name>
</gene>
<name>RISB_SALAI</name>
<proteinExistence type="inferred from homology"/>
<accession>A8LY39</accession>
<sequence length="165" mass="16942">MAGFGEPGIDTVDAAGLTVGVVAARWHGELTDHMLERAVAAADACGARSVVARVAGSVELPVVAQALARRYDVVVALGVVVRGATAHFDYVCRSVTDGLTRVALDEGKPVGHGVLTVNTIEQARDRAGLPGSAEDKGWATTVAVLDAALAVRGLARTTQRVGFDA</sequence>
<evidence type="ECO:0000255" key="1">
    <source>
        <dbReference type="HAMAP-Rule" id="MF_00178"/>
    </source>
</evidence>
<protein>
    <recommendedName>
        <fullName evidence="1">6,7-dimethyl-8-ribityllumazine synthase</fullName>
        <shortName evidence="1">DMRL synthase</shortName>
        <shortName evidence="1">LS</shortName>
        <shortName evidence="1">Lumazine synthase</shortName>
        <ecNumber evidence="1">2.5.1.78</ecNumber>
    </recommendedName>
</protein>
<keyword id="KW-0686">Riboflavin biosynthesis</keyword>
<keyword id="KW-0808">Transferase</keyword>
<reference key="1">
    <citation type="submission" date="2007-10" db="EMBL/GenBank/DDBJ databases">
        <title>Complete sequence of Salinispora arenicola CNS-205.</title>
        <authorList>
            <consortium name="US DOE Joint Genome Institute"/>
            <person name="Copeland A."/>
            <person name="Lucas S."/>
            <person name="Lapidus A."/>
            <person name="Barry K."/>
            <person name="Glavina del Rio T."/>
            <person name="Dalin E."/>
            <person name="Tice H."/>
            <person name="Pitluck S."/>
            <person name="Foster B."/>
            <person name="Schmutz J."/>
            <person name="Larimer F."/>
            <person name="Land M."/>
            <person name="Hauser L."/>
            <person name="Kyrpides N."/>
            <person name="Ivanova N."/>
            <person name="Jensen P.R."/>
            <person name="Moore B.S."/>
            <person name="Penn K."/>
            <person name="Jenkins C."/>
            <person name="Udwary D."/>
            <person name="Xiang L."/>
            <person name="Gontang E."/>
            <person name="Richardson P."/>
        </authorList>
    </citation>
    <scope>NUCLEOTIDE SEQUENCE [LARGE SCALE GENOMIC DNA]</scope>
    <source>
        <strain>CNS-205</strain>
    </source>
</reference>
<dbReference type="EC" id="2.5.1.78" evidence="1"/>
<dbReference type="EMBL" id="CP000850">
    <property type="protein sequence ID" value="ABV97756.1"/>
    <property type="molecule type" value="Genomic_DNA"/>
</dbReference>
<dbReference type="SMR" id="A8LY39"/>
<dbReference type="STRING" id="391037.Sare_1871"/>
<dbReference type="KEGG" id="saq:Sare_1871"/>
<dbReference type="PATRIC" id="fig|391037.6.peg.1899"/>
<dbReference type="eggNOG" id="COG0054">
    <property type="taxonomic scope" value="Bacteria"/>
</dbReference>
<dbReference type="HOGENOM" id="CLU_089358_1_2_11"/>
<dbReference type="OrthoDB" id="9809709at2"/>
<dbReference type="UniPathway" id="UPA00275">
    <property type="reaction ID" value="UER00404"/>
</dbReference>
<dbReference type="GO" id="GO:0005829">
    <property type="term" value="C:cytosol"/>
    <property type="evidence" value="ECO:0007669"/>
    <property type="project" value="TreeGrafter"/>
</dbReference>
<dbReference type="GO" id="GO:0009349">
    <property type="term" value="C:riboflavin synthase complex"/>
    <property type="evidence" value="ECO:0007669"/>
    <property type="project" value="InterPro"/>
</dbReference>
<dbReference type="GO" id="GO:0000906">
    <property type="term" value="F:6,7-dimethyl-8-ribityllumazine synthase activity"/>
    <property type="evidence" value="ECO:0007669"/>
    <property type="project" value="UniProtKB-UniRule"/>
</dbReference>
<dbReference type="GO" id="GO:0009231">
    <property type="term" value="P:riboflavin biosynthetic process"/>
    <property type="evidence" value="ECO:0007669"/>
    <property type="project" value="UniProtKB-UniRule"/>
</dbReference>
<dbReference type="Gene3D" id="3.40.50.960">
    <property type="entry name" value="Lumazine/riboflavin synthase"/>
    <property type="match status" value="1"/>
</dbReference>
<dbReference type="HAMAP" id="MF_00178">
    <property type="entry name" value="Lumazine_synth"/>
    <property type="match status" value="1"/>
</dbReference>
<dbReference type="InterPro" id="IPR034964">
    <property type="entry name" value="LS"/>
</dbReference>
<dbReference type="InterPro" id="IPR002180">
    <property type="entry name" value="LS/RS"/>
</dbReference>
<dbReference type="InterPro" id="IPR036467">
    <property type="entry name" value="LS/RS_sf"/>
</dbReference>
<dbReference type="NCBIfam" id="TIGR00114">
    <property type="entry name" value="lumazine-synth"/>
    <property type="match status" value="1"/>
</dbReference>
<dbReference type="PANTHER" id="PTHR21058:SF0">
    <property type="entry name" value="6,7-DIMETHYL-8-RIBITYLLUMAZINE SYNTHASE"/>
    <property type="match status" value="1"/>
</dbReference>
<dbReference type="PANTHER" id="PTHR21058">
    <property type="entry name" value="6,7-DIMETHYL-8-RIBITYLLUMAZINE SYNTHASE DMRL SYNTHASE LUMAZINE SYNTHASE"/>
    <property type="match status" value="1"/>
</dbReference>
<dbReference type="Pfam" id="PF00885">
    <property type="entry name" value="DMRL_synthase"/>
    <property type="match status" value="1"/>
</dbReference>
<dbReference type="SUPFAM" id="SSF52121">
    <property type="entry name" value="Lumazine synthase"/>
    <property type="match status" value="1"/>
</dbReference>
<comment type="function">
    <text evidence="1">Catalyzes the formation of 6,7-dimethyl-8-ribityllumazine by condensation of 5-amino-6-(D-ribitylamino)uracil with 3,4-dihydroxy-2-butanone 4-phosphate. This is the penultimate step in the biosynthesis of riboflavin.</text>
</comment>
<comment type="catalytic activity">
    <reaction evidence="1">
        <text>(2S)-2-hydroxy-3-oxobutyl phosphate + 5-amino-6-(D-ribitylamino)uracil = 6,7-dimethyl-8-(1-D-ribityl)lumazine + phosphate + 2 H2O + H(+)</text>
        <dbReference type="Rhea" id="RHEA:26152"/>
        <dbReference type="ChEBI" id="CHEBI:15377"/>
        <dbReference type="ChEBI" id="CHEBI:15378"/>
        <dbReference type="ChEBI" id="CHEBI:15934"/>
        <dbReference type="ChEBI" id="CHEBI:43474"/>
        <dbReference type="ChEBI" id="CHEBI:58201"/>
        <dbReference type="ChEBI" id="CHEBI:58830"/>
        <dbReference type="EC" id="2.5.1.78"/>
    </reaction>
</comment>
<comment type="pathway">
    <text evidence="1">Cofactor biosynthesis; riboflavin biosynthesis; riboflavin from 2-hydroxy-3-oxobutyl phosphate and 5-amino-6-(D-ribitylamino)uracil: step 1/2.</text>
</comment>
<comment type="similarity">
    <text evidence="1">Belongs to the DMRL synthase family.</text>
</comment>
<feature type="chain" id="PRO_1000077246" description="6,7-dimethyl-8-ribityllumazine synthase">
    <location>
        <begin position="1"/>
        <end position="165"/>
    </location>
</feature>
<feature type="active site" description="Proton donor" evidence="1">
    <location>
        <position position="87"/>
    </location>
</feature>
<feature type="binding site" evidence="1">
    <location>
        <position position="26"/>
    </location>
    <ligand>
        <name>5-amino-6-(D-ribitylamino)uracil</name>
        <dbReference type="ChEBI" id="CHEBI:15934"/>
    </ligand>
</feature>
<feature type="binding site" evidence="1">
    <location>
        <begin position="57"/>
        <end position="59"/>
    </location>
    <ligand>
        <name>5-amino-6-(D-ribitylamino)uracil</name>
        <dbReference type="ChEBI" id="CHEBI:15934"/>
    </ligand>
</feature>
<feature type="binding site" evidence="1">
    <location>
        <begin position="79"/>
        <end position="81"/>
    </location>
    <ligand>
        <name>5-amino-6-(D-ribitylamino)uracil</name>
        <dbReference type="ChEBI" id="CHEBI:15934"/>
    </ligand>
</feature>
<feature type="binding site" evidence="1">
    <location>
        <begin position="84"/>
        <end position="85"/>
    </location>
    <ligand>
        <name>(2S)-2-hydroxy-3-oxobutyl phosphate</name>
        <dbReference type="ChEBI" id="CHEBI:58830"/>
    </ligand>
</feature>
<feature type="binding site" evidence="1">
    <location>
        <position position="112"/>
    </location>
    <ligand>
        <name>5-amino-6-(D-ribitylamino)uracil</name>
        <dbReference type="ChEBI" id="CHEBI:15934"/>
    </ligand>
</feature>
<feature type="binding site" evidence="1">
    <location>
        <position position="126"/>
    </location>
    <ligand>
        <name>(2S)-2-hydroxy-3-oxobutyl phosphate</name>
        <dbReference type="ChEBI" id="CHEBI:58830"/>
    </ligand>
</feature>